<feature type="chain" id="PRO_1000187181" description="L-fucose mutarotase">
    <location>
        <begin position="1"/>
        <end position="140"/>
    </location>
</feature>
<feature type="active site" description="Proton donor" evidence="1">
    <location>
        <position position="22"/>
    </location>
</feature>
<feature type="binding site" evidence="1">
    <location>
        <position position="30"/>
    </location>
    <ligand>
        <name>substrate</name>
    </ligand>
</feature>
<feature type="binding site" evidence="1">
    <location>
        <position position="107"/>
    </location>
    <ligand>
        <name>substrate</name>
    </ligand>
</feature>
<feature type="binding site" evidence="1">
    <location>
        <begin position="129"/>
        <end position="131"/>
    </location>
    <ligand>
        <name>substrate</name>
    </ligand>
</feature>
<keyword id="KW-0119">Carbohydrate metabolism</keyword>
<keyword id="KW-0963">Cytoplasm</keyword>
<keyword id="KW-0294">Fucose metabolism</keyword>
<keyword id="KW-0413">Isomerase</keyword>
<protein>
    <recommendedName>
        <fullName evidence="1">L-fucose mutarotase</fullName>
        <ecNumber evidence="1">5.1.3.29</ecNumber>
    </recommendedName>
    <alternativeName>
        <fullName evidence="1">Fucose 1-epimerase</fullName>
    </alternativeName>
    <alternativeName>
        <fullName evidence="1">Type-2 mutarotase</fullName>
    </alternativeName>
</protein>
<name>FUCM_ECO8A</name>
<evidence type="ECO:0000255" key="1">
    <source>
        <dbReference type="HAMAP-Rule" id="MF_01662"/>
    </source>
</evidence>
<organism>
    <name type="scientific">Escherichia coli O8 (strain IAI1)</name>
    <dbReference type="NCBI Taxonomy" id="585034"/>
    <lineage>
        <taxon>Bacteria</taxon>
        <taxon>Pseudomonadati</taxon>
        <taxon>Pseudomonadota</taxon>
        <taxon>Gammaproteobacteria</taxon>
        <taxon>Enterobacterales</taxon>
        <taxon>Enterobacteriaceae</taxon>
        <taxon>Escherichia</taxon>
    </lineage>
</organism>
<comment type="function">
    <text evidence="1">Involved in the anomeric conversion of L-fucose.</text>
</comment>
<comment type="catalytic activity">
    <reaction evidence="1">
        <text>alpha-L-fucose = beta-L-fucose</text>
        <dbReference type="Rhea" id="RHEA:25580"/>
        <dbReference type="ChEBI" id="CHEBI:42548"/>
        <dbReference type="ChEBI" id="CHEBI:42589"/>
        <dbReference type="EC" id="5.1.3.29"/>
    </reaction>
</comment>
<comment type="pathway">
    <text evidence="1">Carbohydrate metabolism; L-fucose metabolism.</text>
</comment>
<comment type="subunit">
    <text evidence="1">Homodecamer.</text>
</comment>
<comment type="subcellular location">
    <subcellularLocation>
        <location evidence="1">Cytoplasm</location>
    </subcellularLocation>
</comment>
<comment type="similarity">
    <text evidence="1">Belongs to the RbsD / FucU family. FucU mutarotase subfamily.</text>
</comment>
<accession>B7LXM0</accession>
<sequence>MLKTISPLISPELLKVLAEMGHGDEIIFSDAHFPAHSMGPQVIRADGLLVSDLLQAIIPLFELDSYAPPLVMMAAVEGDTLDPEVERRYRNALSLQAPCPDIIRINRFAFYERAQKAFAIVITGERAKYGNILLKKGVTP</sequence>
<proteinExistence type="inferred from homology"/>
<dbReference type="EC" id="5.1.3.29" evidence="1"/>
<dbReference type="EMBL" id="CU928160">
    <property type="protein sequence ID" value="CAQ99732.1"/>
    <property type="molecule type" value="Genomic_DNA"/>
</dbReference>
<dbReference type="RefSeq" id="WP_000920840.1">
    <property type="nucleotide sequence ID" value="NC_011741.1"/>
</dbReference>
<dbReference type="SMR" id="B7LXM0"/>
<dbReference type="GeneID" id="93779194"/>
<dbReference type="KEGG" id="ecr:ECIAI1_2914"/>
<dbReference type="HOGENOM" id="CLU_120075_1_0_6"/>
<dbReference type="UniPathway" id="UPA00956"/>
<dbReference type="GO" id="GO:0005737">
    <property type="term" value="C:cytoplasm"/>
    <property type="evidence" value="ECO:0007669"/>
    <property type="project" value="UniProtKB-SubCell"/>
</dbReference>
<dbReference type="GO" id="GO:0042806">
    <property type="term" value="F:fucose binding"/>
    <property type="evidence" value="ECO:0007669"/>
    <property type="project" value="InterPro"/>
</dbReference>
<dbReference type="GO" id="GO:0036373">
    <property type="term" value="F:L-fucose mutarotase activity"/>
    <property type="evidence" value="ECO:0007669"/>
    <property type="project" value="UniProtKB-EC"/>
</dbReference>
<dbReference type="GO" id="GO:0036065">
    <property type="term" value="P:fucosylation"/>
    <property type="evidence" value="ECO:0007669"/>
    <property type="project" value="TreeGrafter"/>
</dbReference>
<dbReference type="GO" id="GO:0042354">
    <property type="term" value="P:L-fucose metabolic process"/>
    <property type="evidence" value="ECO:0007669"/>
    <property type="project" value="UniProtKB-UniRule"/>
</dbReference>
<dbReference type="FunFam" id="3.40.1650.10:FF:000001">
    <property type="entry name" value="L-fucose mutarotase"/>
    <property type="match status" value="1"/>
</dbReference>
<dbReference type="Gene3D" id="3.40.1650.10">
    <property type="entry name" value="RbsD-like domain"/>
    <property type="match status" value="1"/>
</dbReference>
<dbReference type="HAMAP" id="MF_01662">
    <property type="entry name" value="L_fucose_rotase"/>
    <property type="match status" value="1"/>
</dbReference>
<dbReference type="InterPro" id="IPR023751">
    <property type="entry name" value="L-fucose_mutarotase"/>
</dbReference>
<dbReference type="InterPro" id="IPR023750">
    <property type="entry name" value="RbsD-like_sf"/>
</dbReference>
<dbReference type="InterPro" id="IPR050443">
    <property type="entry name" value="RbsD/FucU_mutarotase"/>
</dbReference>
<dbReference type="InterPro" id="IPR007721">
    <property type="entry name" value="RbsD_FucU"/>
</dbReference>
<dbReference type="NCBIfam" id="NF011949">
    <property type="entry name" value="PRK15420.1"/>
    <property type="match status" value="1"/>
</dbReference>
<dbReference type="PANTHER" id="PTHR31690">
    <property type="entry name" value="FUCOSE MUTAROTASE"/>
    <property type="match status" value="1"/>
</dbReference>
<dbReference type="PANTHER" id="PTHR31690:SF4">
    <property type="entry name" value="FUCOSE MUTAROTASE"/>
    <property type="match status" value="1"/>
</dbReference>
<dbReference type="Pfam" id="PF05025">
    <property type="entry name" value="RbsD_FucU"/>
    <property type="match status" value="1"/>
</dbReference>
<dbReference type="SUPFAM" id="SSF102546">
    <property type="entry name" value="RbsD-like"/>
    <property type="match status" value="1"/>
</dbReference>
<gene>
    <name evidence="1" type="primary">fucU</name>
    <name type="ordered locus">ECIAI1_2914</name>
</gene>
<reference key="1">
    <citation type="journal article" date="2009" name="PLoS Genet.">
        <title>Organised genome dynamics in the Escherichia coli species results in highly diverse adaptive paths.</title>
        <authorList>
            <person name="Touchon M."/>
            <person name="Hoede C."/>
            <person name="Tenaillon O."/>
            <person name="Barbe V."/>
            <person name="Baeriswyl S."/>
            <person name="Bidet P."/>
            <person name="Bingen E."/>
            <person name="Bonacorsi S."/>
            <person name="Bouchier C."/>
            <person name="Bouvet O."/>
            <person name="Calteau A."/>
            <person name="Chiapello H."/>
            <person name="Clermont O."/>
            <person name="Cruveiller S."/>
            <person name="Danchin A."/>
            <person name="Diard M."/>
            <person name="Dossat C."/>
            <person name="Karoui M.E."/>
            <person name="Frapy E."/>
            <person name="Garry L."/>
            <person name="Ghigo J.M."/>
            <person name="Gilles A.M."/>
            <person name="Johnson J."/>
            <person name="Le Bouguenec C."/>
            <person name="Lescat M."/>
            <person name="Mangenot S."/>
            <person name="Martinez-Jehanne V."/>
            <person name="Matic I."/>
            <person name="Nassif X."/>
            <person name="Oztas S."/>
            <person name="Petit M.A."/>
            <person name="Pichon C."/>
            <person name="Rouy Z."/>
            <person name="Ruf C.S."/>
            <person name="Schneider D."/>
            <person name="Tourret J."/>
            <person name="Vacherie B."/>
            <person name="Vallenet D."/>
            <person name="Medigue C."/>
            <person name="Rocha E.P.C."/>
            <person name="Denamur E."/>
        </authorList>
    </citation>
    <scope>NUCLEOTIDE SEQUENCE [LARGE SCALE GENOMIC DNA]</scope>
    <source>
        <strain>IAI1</strain>
    </source>
</reference>